<organism>
    <name type="scientific">Salmonella arizonae (strain ATCC BAA-731 / CDC346-86 / RSK2980)</name>
    <dbReference type="NCBI Taxonomy" id="41514"/>
    <lineage>
        <taxon>Bacteria</taxon>
        <taxon>Pseudomonadati</taxon>
        <taxon>Pseudomonadota</taxon>
        <taxon>Gammaproteobacteria</taxon>
        <taxon>Enterobacterales</taxon>
        <taxon>Enterobacteriaceae</taxon>
        <taxon>Salmonella</taxon>
    </lineage>
</organism>
<gene>
    <name evidence="1" type="primary">cdh</name>
    <name type="ordered locus">SARI_03579</name>
</gene>
<protein>
    <recommendedName>
        <fullName evidence="1">CDP-diacylglycerol pyrophosphatase</fullName>
        <ecNumber evidence="1">3.6.1.26</ecNumber>
    </recommendedName>
    <alternativeName>
        <fullName evidence="1">CDP-diacylglycerol phosphatidylhydrolase</fullName>
    </alternativeName>
    <alternativeName>
        <fullName evidence="1">CDP-diglyceride hydrolase</fullName>
    </alternativeName>
</protein>
<evidence type="ECO:0000255" key="1">
    <source>
        <dbReference type="HAMAP-Rule" id="MF_00319"/>
    </source>
</evidence>
<accession>A9MI48</accession>
<name>CDH_SALAR</name>
<proteinExistence type="inferred from homology"/>
<dbReference type="EC" id="3.6.1.26" evidence="1"/>
<dbReference type="EMBL" id="CP000880">
    <property type="protein sequence ID" value="ABX23394.1"/>
    <property type="molecule type" value="Genomic_DNA"/>
</dbReference>
<dbReference type="SMR" id="A9MI48"/>
<dbReference type="STRING" id="41514.SARI_03579"/>
<dbReference type="KEGG" id="ses:SARI_03579"/>
<dbReference type="HOGENOM" id="CLU_077117_0_1_6"/>
<dbReference type="UniPathway" id="UPA00609">
    <property type="reaction ID" value="UER00664"/>
</dbReference>
<dbReference type="Proteomes" id="UP000002084">
    <property type="component" value="Chromosome"/>
</dbReference>
<dbReference type="GO" id="GO:0005886">
    <property type="term" value="C:plasma membrane"/>
    <property type="evidence" value="ECO:0007669"/>
    <property type="project" value="UniProtKB-SubCell"/>
</dbReference>
<dbReference type="GO" id="GO:0008715">
    <property type="term" value="F:CDP-diacylglycerol diphosphatase activity"/>
    <property type="evidence" value="ECO:0007669"/>
    <property type="project" value="UniProtKB-UniRule"/>
</dbReference>
<dbReference type="GO" id="GO:0046342">
    <property type="term" value="P:CDP-diacylglycerol catabolic process"/>
    <property type="evidence" value="ECO:0007669"/>
    <property type="project" value="UniProtKB-UniRule"/>
</dbReference>
<dbReference type="GO" id="GO:0008654">
    <property type="term" value="P:phospholipid biosynthetic process"/>
    <property type="evidence" value="ECO:0007669"/>
    <property type="project" value="UniProtKB-KW"/>
</dbReference>
<dbReference type="Gene3D" id="3.30.428.30">
    <property type="entry name" value="HIT family - CDH-like"/>
    <property type="match status" value="1"/>
</dbReference>
<dbReference type="HAMAP" id="MF_00319">
    <property type="entry name" value="Cdh"/>
    <property type="match status" value="1"/>
</dbReference>
<dbReference type="InterPro" id="IPR003763">
    <property type="entry name" value="CDP-diacylglyc_Pase"/>
</dbReference>
<dbReference type="InterPro" id="IPR015993">
    <property type="entry name" value="CDP-diacylglyc_Pase_proteobac"/>
</dbReference>
<dbReference type="InterPro" id="IPR036265">
    <property type="entry name" value="HIT-like_sf"/>
</dbReference>
<dbReference type="NCBIfam" id="TIGR00672">
    <property type="entry name" value="cdh"/>
    <property type="match status" value="1"/>
</dbReference>
<dbReference type="NCBIfam" id="NF003986">
    <property type="entry name" value="PRK05471.1-5"/>
    <property type="match status" value="1"/>
</dbReference>
<dbReference type="NCBIfam" id="NF003987">
    <property type="entry name" value="PRK05471.1-6"/>
    <property type="match status" value="1"/>
</dbReference>
<dbReference type="Pfam" id="PF02611">
    <property type="entry name" value="CDH"/>
    <property type="match status" value="1"/>
</dbReference>
<dbReference type="PIRSF" id="PIRSF001273">
    <property type="entry name" value="CDH"/>
    <property type="match status" value="1"/>
</dbReference>
<dbReference type="SUPFAM" id="SSF54197">
    <property type="entry name" value="HIT-like"/>
    <property type="match status" value="1"/>
</dbReference>
<sequence length="249" mass="28217">MKKTGYFLLAVIVIVAAAGVGYWKFSGNPDALREIVLEQCLPDQLQHQNPAPCAEVKPRAGYVVFKDRHGPLQYLLMPTYRINGTESPLLLEPATPNFFWLAWQARDYMSKKYGHDIPDSAVSLTVNSRLGRSQDHLHIHISCIRPDVREQLDNDLTRISTRWLPLPGGLMGHEYLARRVTESELAQRSPFMMLAEEVPEARDHMGRYGLAVVRQSDGSFVLLATQRNLLTLNRASAEEIQDHQCDILK</sequence>
<keyword id="KW-0997">Cell inner membrane</keyword>
<keyword id="KW-1003">Cell membrane</keyword>
<keyword id="KW-0378">Hydrolase</keyword>
<keyword id="KW-0444">Lipid biosynthesis</keyword>
<keyword id="KW-0443">Lipid metabolism</keyword>
<keyword id="KW-0472">Membrane</keyword>
<keyword id="KW-0594">Phospholipid biosynthesis</keyword>
<keyword id="KW-1208">Phospholipid metabolism</keyword>
<keyword id="KW-1185">Reference proteome</keyword>
<keyword id="KW-0812">Transmembrane</keyword>
<keyword id="KW-1133">Transmembrane helix</keyword>
<reference key="1">
    <citation type="submission" date="2007-11" db="EMBL/GenBank/DDBJ databases">
        <authorList>
            <consortium name="The Salmonella enterica serovar Arizonae Genome Sequencing Project"/>
            <person name="McClelland M."/>
            <person name="Sanderson E.K."/>
            <person name="Porwollik S."/>
            <person name="Spieth J."/>
            <person name="Clifton W.S."/>
            <person name="Fulton R."/>
            <person name="Chunyan W."/>
            <person name="Wollam A."/>
            <person name="Shah N."/>
            <person name="Pepin K."/>
            <person name="Bhonagiri V."/>
            <person name="Nash W."/>
            <person name="Johnson M."/>
            <person name="Thiruvilangam P."/>
            <person name="Wilson R."/>
        </authorList>
    </citation>
    <scope>NUCLEOTIDE SEQUENCE [LARGE SCALE GENOMIC DNA]</scope>
    <source>
        <strain>ATCC BAA-731 / CDC346-86 / RSK2980</strain>
    </source>
</reference>
<comment type="catalytic activity">
    <reaction evidence="1">
        <text>a CDP-1,2-diacyl-sn-glycerol + H2O = a 1,2-diacyl-sn-glycero-3-phosphate + CMP + 2 H(+)</text>
        <dbReference type="Rhea" id="RHEA:15221"/>
        <dbReference type="ChEBI" id="CHEBI:15377"/>
        <dbReference type="ChEBI" id="CHEBI:15378"/>
        <dbReference type="ChEBI" id="CHEBI:58332"/>
        <dbReference type="ChEBI" id="CHEBI:58608"/>
        <dbReference type="ChEBI" id="CHEBI:60377"/>
        <dbReference type="EC" id="3.6.1.26"/>
    </reaction>
</comment>
<comment type="pathway">
    <text evidence="1">Phospholipid metabolism; CDP-diacylglycerol degradation; phosphatidate from CDP-diacylglycerol: step 1/1.</text>
</comment>
<comment type="subcellular location">
    <subcellularLocation>
        <location evidence="1">Cell inner membrane</location>
        <topology evidence="1">Single-pass membrane protein</topology>
    </subcellularLocation>
</comment>
<comment type="similarity">
    <text evidence="1">Belongs to the Cdh family.</text>
</comment>
<feature type="chain" id="PRO_1000079161" description="CDP-diacylglycerol pyrophosphatase">
    <location>
        <begin position="1"/>
        <end position="249"/>
    </location>
</feature>
<feature type="transmembrane region" description="Helical" evidence="1">
    <location>
        <begin position="5"/>
        <end position="25"/>
    </location>
</feature>